<reference key="1">
    <citation type="journal article" date="2001" name="Proc. Natl. Acad. Sci. U.S.A.">
        <title>Analysis of the chromosome sequence of the legume symbiont Sinorhizobium meliloti strain 1021.</title>
        <authorList>
            <person name="Capela D."/>
            <person name="Barloy-Hubler F."/>
            <person name="Gouzy J."/>
            <person name="Bothe G."/>
            <person name="Ampe F."/>
            <person name="Batut J."/>
            <person name="Boistard P."/>
            <person name="Becker A."/>
            <person name="Boutry M."/>
            <person name="Cadieu E."/>
            <person name="Dreano S."/>
            <person name="Gloux S."/>
            <person name="Godrie T."/>
            <person name="Goffeau A."/>
            <person name="Kahn D."/>
            <person name="Kiss E."/>
            <person name="Lelaure V."/>
            <person name="Masuy D."/>
            <person name="Pohl T."/>
            <person name="Portetelle D."/>
            <person name="Puehler A."/>
            <person name="Purnelle B."/>
            <person name="Ramsperger U."/>
            <person name="Renard C."/>
            <person name="Thebault P."/>
            <person name="Vandenbol M."/>
            <person name="Weidner S."/>
            <person name="Galibert F."/>
        </authorList>
    </citation>
    <scope>NUCLEOTIDE SEQUENCE [LARGE SCALE GENOMIC DNA]</scope>
    <source>
        <strain>1021</strain>
    </source>
</reference>
<reference key="2">
    <citation type="journal article" date="2001" name="Science">
        <title>The composite genome of the legume symbiont Sinorhizobium meliloti.</title>
        <authorList>
            <person name="Galibert F."/>
            <person name="Finan T.M."/>
            <person name="Long S.R."/>
            <person name="Puehler A."/>
            <person name="Abola P."/>
            <person name="Ampe F."/>
            <person name="Barloy-Hubler F."/>
            <person name="Barnett M.J."/>
            <person name="Becker A."/>
            <person name="Boistard P."/>
            <person name="Bothe G."/>
            <person name="Boutry M."/>
            <person name="Bowser L."/>
            <person name="Buhrmester J."/>
            <person name="Cadieu E."/>
            <person name="Capela D."/>
            <person name="Chain P."/>
            <person name="Cowie A."/>
            <person name="Davis R.W."/>
            <person name="Dreano S."/>
            <person name="Federspiel N.A."/>
            <person name="Fisher R.F."/>
            <person name="Gloux S."/>
            <person name="Godrie T."/>
            <person name="Goffeau A."/>
            <person name="Golding B."/>
            <person name="Gouzy J."/>
            <person name="Gurjal M."/>
            <person name="Hernandez-Lucas I."/>
            <person name="Hong A."/>
            <person name="Huizar L."/>
            <person name="Hyman R.W."/>
            <person name="Jones T."/>
            <person name="Kahn D."/>
            <person name="Kahn M.L."/>
            <person name="Kalman S."/>
            <person name="Keating D.H."/>
            <person name="Kiss E."/>
            <person name="Komp C."/>
            <person name="Lelaure V."/>
            <person name="Masuy D."/>
            <person name="Palm C."/>
            <person name="Peck M.C."/>
            <person name="Pohl T.M."/>
            <person name="Portetelle D."/>
            <person name="Purnelle B."/>
            <person name="Ramsperger U."/>
            <person name="Surzycki R."/>
            <person name="Thebault P."/>
            <person name="Vandenbol M."/>
            <person name="Vorhoelter F.J."/>
            <person name="Weidner S."/>
            <person name="Wells D.H."/>
            <person name="Wong K."/>
            <person name="Yeh K.-C."/>
            <person name="Batut J."/>
        </authorList>
    </citation>
    <scope>NUCLEOTIDE SEQUENCE [LARGE SCALE GENOMIC DNA]</scope>
    <source>
        <strain>1021</strain>
    </source>
</reference>
<comment type="function">
    <text evidence="1">Bidirectionally degrades single-stranded DNA into large acid-insoluble oligonucleotides, which are then degraded further into small acid-soluble oligonucleotides.</text>
</comment>
<comment type="catalytic activity">
    <reaction evidence="1">
        <text>Exonucleolytic cleavage in either 5'- to 3'- or 3'- to 5'-direction to yield nucleoside 5'-phosphates.</text>
        <dbReference type="EC" id="3.1.11.6"/>
    </reaction>
</comment>
<comment type="subunit">
    <text evidence="1">Heterooligomer composed of large and small subunits.</text>
</comment>
<comment type="subcellular location">
    <subcellularLocation>
        <location evidence="1">Cytoplasm</location>
    </subcellularLocation>
</comment>
<comment type="similarity">
    <text evidence="1">Belongs to the XseB family.</text>
</comment>
<evidence type="ECO:0000255" key="1">
    <source>
        <dbReference type="HAMAP-Rule" id="MF_00337"/>
    </source>
</evidence>
<name>EX7S_RHIME</name>
<sequence>MNNNAQPDVSALSFEQAVEELERIVSALERGDVALDKSIEIYERGEALKKHCEALLKAAEDRIEKIRLDRAGRPQGVEPLDAE</sequence>
<gene>
    <name evidence="1" type="primary">xseB</name>
    <name type="ordered locus">R00882</name>
    <name type="ORF">SMc00970</name>
</gene>
<feature type="chain" id="PRO_0000206993" description="Exodeoxyribonuclease 7 small subunit">
    <location>
        <begin position="1"/>
        <end position="83"/>
    </location>
</feature>
<dbReference type="EC" id="3.1.11.6" evidence="1"/>
<dbReference type="EMBL" id="AL591688">
    <property type="protein sequence ID" value="CAC45454.1"/>
    <property type="molecule type" value="Genomic_DNA"/>
</dbReference>
<dbReference type="RefSeq" id="NP_384988.1">
    <property type="nucleotide sequence ID" value="NC_003047.1"/>
</dbReference>
<dbReference type="RefSeq" id="WP_003535810.1">
    <property type="nucleotide sequence ID" value="NC_003047.1"/>
</dbReference>
<dbReference type="SMR" id="Q92RI9"/>
<dbReference type="EnsemblBacteria" id="CAC45454">
    <property type="protein sequence ID" value="CAC45454"/>
    <property type="gene ID" value="SMc00970"/>
</dbReference>
<dbReference type="KEGG" id="sme:SMc00970"/>
<dbReference type="PATRIC" id="fig|266834.11.peg.2277"/>
<dbReference type="eggNOG" id="COG1722">
    <property type="taxonomic scope" value="Bacteria"/>
</dbReference>
<dbReference type="HOGENOM" id="CLU_145918_0_3_5"/>
<dbReference type="OrthoDB" id="9808145at2"/>
<dbReference type="Proteomes" id="UP000001976">
    <property type="component" value="Chromosome"/>
</dbReference>
<dbReference type="GO" id="GO:0005829">
    <property type="term" value="C:cytosol"/>
    <property type="evidence" value="ECO:0007669"/>
    <property type="project" value="TreeGrafter"/>
</dbReference>
<dbReference type="GO" id="GO:0009318">
    <property type="term" value="C:exodeoxyribonuclease VII complex"/>
    <property type="evidence" value="ECO:0007669"/>
    <property type="project" value="InterPro"/>
</dbReference>
<dbReference type="GO" id="GO:0008855">
    <property type="term" value="F:exodeoxyribonuclease VII activity"/>
    <property type="evidence" value="ECO:0007669"/>
    <property type="project" value="UniProtKB-UniRule"/>
</dbReference>
<dbReference type="GO" id="GO:0006308">
    <property type="term" value="P:DNA catabolic process"/>
    <property type="evidence" value="ECO:0007669"/>
    <property type="project" value="UniProtKB-UniRule"/>
</dbReference>
<dbReference type="Gene3D" id="1.10.287.1040">
    <property type="entry name" value="Exonuclease VII, small subunit"/>
    <property type="match status" value="1"/>
</dbReference>
<dbReference type="HAMAP" id="MF_00337">
    <property type="entry name" value="Exonuc_7_S"/>
    <property type="match status" value="1"/>
</dbReference>
<dbReference type="InterPro" id="IPR003761">
    <property type="entry name" value="Exonuc_VII_S"/>
</dbReference>
<dbReference type="InterPro" id="IPR037004">
    <property type="entry name" value="Exonuc_VII_ssu_sf"/>
</dbReference>
<dbReference type="NCBIfam" id="NF002139">
    <property type="entry name" value="PRK00977.1-3"/>
    <property type="match status" value="1"/>
</dbReference>
<dbReference type="NCBIfam" id="TIGR01280">
    <property type="entry name" value="xseB"/>
    <property type="match status" value="1"/>
</dbReference>
<dbReference type="PANTHER" id="PTHR34137">
    <property type="entry name" value="EXODEOXYRIBONUCLEASE 7 SMALL SUBUNIT"/>
    <property type="match status" value="1"/>
</dbReference>
<dbReference type="PANTHER" id="PTHR34137:SF1">
    <property type="entry name" value="EXODEOXYRIBONUCLEASE 7 SMALL SUBUNIT"/>
    <property type="match status" value="1"/>
</dbReference>
<dbReference type="Pfam" id="PF02609">
    <property type="entry name" value="Exonuc_VII_S"/>
    <property type="match status" value="1"/>
</dbReference>
<dbReference type="SUPFAM" id="SSF116842">
    <property type="entry name" value="XseB-like"/>
    <property type="match status" value="1"/>
</dbReference>
<organism>
    <name type="scientific">Rhizobium meliloti (strain 1021)</name>
    <name type="common">Ensifer meliloti</name>
    <name type="synonym">Sinorhizobium meliloti</name>
    <dbReference type="NCBI Taxonomy" id="266834"/>
    <lineage>
        <taxon>Bacteria</taxon>
        <taxon>Pseudomonadati</taxon>
        <taxon>Pseudomonadota</taxon>
        <taxon>Alphaproteobacteria</taxon>
        <taxon>Hyphomicrobiales</taxon>
        <taxon>Rhizobiaceae</taxon>
        <taxon>Sinorhizobium/Ensifer group</taxon>
        <taxon>Sinorhizobium</taxon>
    </lineage>
</organism>
<protein>
    <recommendedName>
        <fullName evidence="1">Exodeoxyribonuclease 7 small subunit</fullName>
        <ecNumber evidence="1">3.1.11.6</ecNumber>
    </recommendedName>
    <alternativeName>
        <fullName evidence="1">Exodeoxyribonuclease VII small subunit</fullName>
        <shortName evidence="1">Exonuclease VII small subunit</shortName>
    </alternativeName>
</protein>
<accession>Q92RI9</accession>
<keyword id="KW-0963">Cytoplasm</keyword>
<keyword id="KW-0269">Exonuclease</keyword>
<keyword id="KW-0378">Hydrolase</keyword>
<keyword id="KW-0540">Nuclease</keyword>
<keyword id="KW-1185">Reference proteome</keyword>
<proteinExistence type="inferred from homology"/>